<keyword id="KW-0131">Cell cycle</keyword>
<keyword id="KW-0132">Cell division</keyword>
<keyword id="KW-0143">Chaperone</keyword>
<keyword id="KW-0963">Cytoplasm</keyword>
<keyword id="KW-0413">Isomerase</keyword>
<keyword id="KW-1185">Reference proteome</keyword>
<keyword id="KW-0697">Rotamase</keyword>
<name>TIG_ALCBS</name>
<gene>
    <name evidence="1" type="primary">tig</name>
    <name type="ordered locus">ABO_1209</name>
</gene>
<proteinExistence type="inferred from homology"/>
<dbReference type="EC" id="5.2.1.8" evidence="1"/>
<dbReference type="EMBL" id="AM286690">
    <property type="protein sequence ID" value="CAL16657.1"/>
    <property type="molecule type" value="Genomic_DNA"/>
</dbReference>
<dbReference type="RefSeq" id="WP_011588492.1">
    <property type="nucleotide sequence ID" value="NC_008260.1"/>
</dbReference>
<dbReference type="SMR" id="Q0VQ91"/>
<dbReference type="STRING" id="393595.ABO_1209"/>
<dbReference type="KEGG" id="abo:ABO_1209"/>
<dbReference type="eggNOG" id="COG0544">
    <property type="taxonomic scope" value="Bacteria"/>
</dbReference>
<dbReference type="HOGENOM" id="CLU_033058_2_0_6"/>
<dbReference type="OrthoDB" id="9767721at2"/>
<dbReference type="Proteomes" id="UP000008871">
    <property type="component" value="Chromosome"/>
</dbReference>
<dbReference type="GO" id="GO:0005737">
    <property type="term" value="C:cytoplasm"/>
    <property type="evidence" value="ECO:0007669"/>
    <property type="project" value="UniProtKB-SubCell"/>
</dbReference>
<dbReference type="GO" id="GO:0003755">
    <property type="term" value="F:peptidyl-prolyl cis-trans isomerase activity"/>
    <property type="evidence" value="ECO:0007669"/>
    <property type="project" value="UniProtKB-UniRule"/>
</dbReference>
<dbReference type="GO" id="GO:0044183">
    <property type="term" value="F:protein folding chaperone"/>
    <property type="evidence" value="ECO:0007669"/>
    <property type="project" value="TreeGrafter"/>
</dbReference>
<dbReference type="GO" id="GO:0043022">
    <property type="term" value="F:ribosome binding"/>
    <property type="evidence" value="ECO:0007669"/>
    <property type="project" value="TreeGrafter"/>
</dbReference>
<dbReference type="GO" id="GO:0051083">
    <property type="term" value="P:'de novo' cotranslational protein folding"/>
    <property type="evidence" value="ECO:0007669"/>
    <property type="project" value="TreeGrafter"/>
</dbReference>
<dbReference type="GO" id="GO:0051301">
    <property type="term" value="P:cell division"/>
    <property type="evidence" value="ECO:0007669"/>
    <property type="project" value="UniProtKB-KW"/>
</dbReference>
<dbReference type="GO" id="GO:0061077">
    <property type="term" value="P:chaperone-mediated protein folding"/>
    <property type="evidence" value="ECO:0007669"/>
    <property type="project" value="TreeGrafter"/>
</dbReference>
<dbReference type="GO" id="GO:0015031">
    <property type="term" value="P:protein transport"/>
    <property type="evidence" value="ECO:0007669"/>
    <property type="project" value="UniProtKB-UniRule"/>
</dbReference>
<dbReference type="GO" id="GO:0043335">
    <property type="term" value="P:protein unfolding"/>
    <property type="evidence" value="ECO:0007669"/>
    <property type="project" value="TreeGrafter"/>
</dbReference>
<dbReference type="FunFam" id="3.10.50.40:FF:000001">
    <property type="entry name" value="Trigger factor"/>
    <property type="match status" value="1"/>
</dbReference>
<dbReference type="Gene3D" id="3.10.50.40">
    <property type="match status" value="1"/>
</dbReference>
<dbReference type="Gene3D" id="3.30.70.1050">
    <property type="entry name" value="Trigger factor ribosome-binding domain"/>
    <property type="match status" value="1"/>
</dbReference>
<dbReference type="Gene3D" id="1.10.3120.10">
    <property type="entry name" value="Trigger factor, C-terminal domain"/>
    <property type="match status" value="1"/>
</dbReference>
<dbReference type="HAMAP" id="MF_00303">
    <property type="entry name" value="Trigger_factor_Tig"/>
    <property type="match status" value="1"/>
</dbReference>
<dbReference type="InterPro" id="IPR046357">
    <property type="entry name" value="PPIase_dom_sf"/>
</dbReference>
<dbReference type="InterPro" id="IPR001179">
    <property type="entry name" value="PPIase_FKBP_dom"/>
</dbReference>
<dbReference type="InterPro" id="IPR005215">
    <property type="entry name" value="Trig_fac"/>
</dbReference>
<dbReference type="InterPro" id="IPR008880">
    <property type="entry name" value="Trigger_fac_C"/>
</dbReference>
<dbReference type="InterPro" id="IPR037041">
    <property type="entry name" value="Trigger_fac_C_sf"/>
</dbReference>
<dbReference type="InterPro" id="IPR008881">
    <property type="entry name" value="Trigger_fac_ribosome-bd_bac"/>
</dbReference>
<dbReference type="InterPro" id="IPR036611">
    <property type="entry name" value="Trigger_fac_ribosome-bd_sf"/>
</dbReference>
<dbReference type="InterPro" id="IPR027304">
    <property type="entry name" value="Trigger_fact/SurA_dom_sf"/>
</dbReference>
<dbReference type="NCBIfam" id="TIGR00115">
    <property type="entry name" value="tig"/>
    <property type="match status" value="1"/>
</dbReference>
<dbReference type="PANTHER" id="PTHR30560">
    <property type="entry name" value="TRIGGER FACTOR CHAPERONE AND PEPTIDYL-PROLYL CIS/TRANS ISOMERASE"/>
    <property type="match status" value="1"/>
</dbReference>
<dbReference type="PANTHER" id="PTHR30560:SF3">
    <property type="entry name" value="TRIGGER FACTOR-LIKE PROTEIN TIG, CHLOROPLASTIC"/>
    <property type="match status" value="1"/>
</dbReference>
<dbReference type="Pfam" id="PF00254">
    <property type="entry name" value="FKBP_C"/>
    <property type="match status" value="1"/>
</dbReference>
<dbReference type="Pfam" id="PF05698">
    <property type="entry name" value="Trigger_C"/>
    <property type="match status" value="1"/>
</dbReference>
<dbReference type="Pfam" id="PF05697">
    <property type="entry name" value="Trigger_N"/>
    <property type="match status" value="1"/>
</dbReference>
<dbReference type="PIRSF" id="PIRSF003095">
    <property type="entry name" value="Trigger_factor"/>
    <property type="match status" value="1"/>
</dbReference>
<dbReference type="SUPFAM" id="SSF54534">
    <property type="entry name" value="FKBP-like"/>
    <property type="match status" value="1"/>
</dbReference>
<dbReference type="SUPFAM" id="SSF109998">
    <property type="entry name" value="Triger factor/SurA peptide-binding domain-like"/>
    <property type="match status" value="1"/>
</dbReference>
<dbReference type="SUPFAM" id="SSF102735">
    <property type="entry name" value="Trigger factor ribosome-binding domain"/>
    <property type="match status" value="1"/>
</dbReference>
<dbReference type="PROSITE" id="PS50059">
    <property type="entry name" value="FKBP_PPIASE"/>
    <property type="match status" value="1"/>
</dbReference>
<organism>
    <name type="scientific">Alcanivorax borkumensis (strain ATCC 700651 / DSM 11573 / NCIMB 13689 / SK2)</name>
    <dbReference type="NCBI Taxonomy" id="393595"/>
    <lineage>
        <taxon>Bacteria</taxon>
        <taxon>Pseudomonadati</taxon>
        <taxon>Pseudomonadota</taxon>
        <taxon>Gammaproteobacteria</taxon>
        <taxon>Oceanospirillales</taxon>
        <taxon>Alcanivoracaceae</taxon>
        <taxon>Alcanivorax</taxon>
    </lineage>
</organism>
<evidence type="ECO:0000255" key="1">
    <source>
        <dbReference type="HAMAP-Rule" id="MF_00303"/>
    </source>
</evidence>
<reference key="1">
    <citation type="journal article" date="2006" name="Nat. Biotechnol.">
        <title>Genome sequence of the ubiquitous hydrocarbon-degrading marine bacterium Alcanivorax borkumensis.</title>
        <authorList>
            <person name="Schneiker S."/>
            <person name="Martins dos Santos V.A.P."/>
            <person name="Bartels D."/>
            <person name="Bekel T."/>
            <person name="Brecht M."/>
            <person name="Buhrmester J."/>
            <person name="Chernikova T.N."/>
            <person name="Denaro R."/>
            <person name="Ferrer M."/>
            <person name="Gertler C."/>
            <person name="Goesmann A."/>
            <person name="Golyshina O.V."/>
            <person name="Kaminski F."/>
            <person name="Khachane A.N."/>
            <person name="Lang S."/>
            <person name="Linke B."/>
            <person name="McHardy A.C."/>
            <person name="Meyer F."/>
            <person name="Nechitaylo T."/>
            <person name="Puehler A."/>
            <person name="Regenhardt D."/>
            <person name="Rupp O."/>
            <person name="Sabirova J.S."/>
            <person name="Selbitschka W."/>
            <person name="Yakimov M.M."/>
            <person name="Timmis K.N."/>
            <person name="Vorhoelter F.-J."/>
            <person name="Weidner S."/>
            <person name="Kaiser O."/>
            <person name="Golyshin P.N."/>
        </authorList>
    </citation>
    <scope>NUCLEOTIDE SEQUENCE [LARGE SCALE GENOMIC DNA]</scope>
    <source>
        <strain>ATCC 700651 / DSM 11573 / NCIMB 13689 / SK2</strain>
    </source>
</reference>
<feature type="chain" id="PRO_0000256525" description="Trigger factor">
    <location>
        <begin position="1"/>
        <end position="437"/>
    </location>
</feature>
<feature type="domain" description="PPIase FKBP-type" evidence="1">
    <location>
        <begin position="161"/>
        <end position="246"/>
    </location>
</feature>
<protein>
    <recommendedName>
        <fullName evidence="1">Trigger factor</fullName>
        <shortName evidence="1">TF</shortName>
        <ecNumber evidence="1">5.2.1.8</ecNumber>
    </recommendedName>
    <alternativeName>
        <fullName evidence="1">PPIase</fullName>
    </alternativeName>
</protein>
<sequence length="437" mass="48678">MQVSVETTSGLERRVTVGVPAEKVDVAVEGKLQEAQKTIRLDGFRPGKVPMREVKRRFGGAVRNEVLADVMREAFIEAVEQEKLQPAGMPGFEATTNEAGKDLEFVATFEVYPQVELAAFDSIEVEKPQSEVTDADVDTMIETLRQQRAEFADVDRASEIGDRVNIDFKGLKDGEAFEGGTAEGQNLELGSGQMIPGFEDGIVGMKAGEEKDIDVTFPEDYQSEDLKGQAVVFHIKVNKVEGKALPEVDAEFMKGFGVDDGDETKFKAEVRKNMERELKNAITSKVKEQAMDGLVNLHEFDLPGALVTQEIQRMRQQMMQQFGGGQQFDPSILPDDLFKEQAERSVRLGLVVRAILDKNEIKADADKVKARVEEISEQYEKPEEVVSWVYSNPQQLQQIEGAILEEQVVDLVLESAKVEEKTMPYQDAVKPREQADG</sequence>
<accession>Q0VQ91</accession>
<comment type="function">
    <text evidence="1">Involved in protein export. Acts as a chaperone by maintaining the newly synthesized protein in an open conformation. Functions as a peptidyl-prolyl cis-trans isomerase.</text>
</comment>
<comment type="catalytic activity">
    <reaction evidence="1">
        <text>[protein]-peptidylproline (omega=180) = [protein]-peptidylproline (omega=0)</text>
        <dbReference type="Rhea" id="RHEA:16237"/>
        <dbReference type="Rhea" id="RHEA-COMP:10747"/>
        <dbReference type="Rhea" id="RHEA-COMP:10748"/>
        <dbReference type="ChEBI" id="CHEBI:83833"/>
        <dbReference type="ChEBI" id="CHEBI:83834"/>
        <dbReference type="EC" id="5.2.1.8"/>
    </reaction>
</comment>
<comment type="subcellular location">
    <subcellularLocation>
        <location>Cytoplasm</location>
    </subcellularLocation>
    <text evidence="1">About half TF is bound to the ribosome near the polypeptide exit tunnel while the other half is free in the cytoplasm.</text>
</comment>
<comment type="domain">
    <text evidence="1">Consists of 3 domains; the N-terminus binds the ribosome, the middle domain has PPIase activity, while the C-terminus has intrinsic chaperone activity on its own.</text>
</comment>
<comment type="similarity">
    <text evidence="1">Belongs to the FKBP-type PPIase family. Tig subfamily.</text>
</comment>